<proteinExistence type="inferred from homology"/>
<reference key="1">
    <citation type="journal article" date="2012" name="BMC Genomics">
        <title>Comparative genomics and transcriptomics of lineages I, II, and III strains of Listeria monocytogenes.</title>
        <authorList>
            <person name="Hain T."/>
            <person name="Ghai R."/>
            <person name="Billion A."/>
            <person name="Kuenne C.T."/>
            <person name="Steinweg C."/>
            <person name="Izar B."/>
            <person name="Mohamed W."/>
            <person name="Mraheil M."/>
            <person name="Domann E."/>
            <person name="Schaffrath S."/>
            <person name="Karst U."/>
            <person name="Goesmann A."/>
            <person name="Oehm S."/>
            <person name="Puhler A."/>
            <person name="Merkl R."/>
            <person name="Vorwerk S."/>
            <person name="Glaser P."/>
            <person name="Garrido P."/>
            <person name="Rusniok C."/>
            <person name="Buchrieser C."/>
            <person name="Goebel W."/>
            <person name="Chakraborty T."/>
        </authorList>
    </citation>
    <scope>NUCLEOTIDE SEQUENCE [LARGE SCALE GENOMIC DNA]</scope>
    <source>
        <strain>CLIP80459</strain>
    </source>
</reference>
<organism>
    <name type="scientific">Listeria monocytogenes serotype 4b (strain CLIP80459)</name>
    <dbReference type="NCBI Taxonomy" id="568819"/>
    <lineage>
        <taxon>Bacteria</taxon>
        <taxon>Bacillati</taxon>
        <taxon>Bacillota</taxon>
        <taxon>Bacilli</taxon>
        <taxon>Bacillales</taxon>
        <taxon>Listeriaceae</taxon>
        <taxon>Listeria</taxon>
    </lineage>
</organism>
<evidence type="ECO:0000255" key="1">
    <source>
        <dbReference type="HAMAP-Rule" id="MF_01225"/>
    </source>
</evidence>
<evidence type="ECO:0000255" key="2">
    <source>
        <dbReference type="PROSITE-ProRule" id="PRU01266"/>
    </source>
</evidence>
<accession>C1L1W8</accession>
<protein>
    <recommendedName>
        <fullName evidence="1">GTP 3',8-cyclase</fullName>
        <ecNumber evidence="1">4.1.99.22</ecNumber>
    </recommendedName>
    <alternativeName>
        <fullName evidence="1">Molybdenum cofactor biosynthesis protein A</fullName>
    </alternativeName>
</protein>
<keyword id="KW-0004">4Fe-4S</keyword>
<keyword id="KW-0342">GTP-binding</keyword>
<keyword id="KW-0408">Iron</keyword>
<keyword id="KW-0411">Iron-sulfur</keyword>
<keyword id="KW-0456">Lyase</keyword>
<keyword id="KW-0479">Metal-binding</keyword>
<keyword id="KW-0501">Molybdenum cofactor biosynthesis</keyword>
<keyword id="KW-0547">Nucleotide-binding</keyword>
<keyword id="KW-0949">S-adenosyl-L-methionine</keyword>
<feature type="chain" id="PRO_1000213999" description="GTP 3',8-cyclase">
    <location>
        <begin position="1"/>
        <end position="333"/>
    </location>
</feature>
<feature type="domain" description="Radical SAM core" evidence="2">
    <location>
        <begin position="7"/>
        <end position="221"/>
    </location>
</feature>
<feature type="binding site" evidence="1">
    <location>
        <position position="16"/>
    </location>
    <ligand>
        <name>GTP</name>
        <dbReference type="ChEBI" id="CHEBI:37565"/>
    </ligand>
</feature>
<feature type="binding site" evidence="1">
    <location>
        <position position="23"/>
    </location>
    <ligand>
        <name>[4Fe-4S] cluster</name>
        <dbReference type="ChEBI" id="CHEBI:49883"/>
        <label>1</label>
        <note>4Fe-4S-S-AdoMet</note>
    </ligand>
</feature>
<feature type="binding site" evidence="1">
    <location>
        <position position="27"/>
    </location>
    <ligand>
        <name>[4Fe-4S] cluster</name>
        <dbReference type="ChEBI" id="CHEBI:49883"/>
        <label>1</label>
        <note>4Fe-4S-S-AdoMet</note>
    </ligand>
</feature>
<feature type="binding site" evidence="1">
    <location>
        <position position="29"/>
    </location>
    <ligand>
        <name>S-adenosyl-L-methionine</name>
        <dbReference type="ChEBI" id="CHEBI:59789"/>
    </ligand>
</feature>
<feature type="binding site" evidence="1">
    <location>
        <position position="30"/>
    </location>
    <ligand>
        <name>[4Fe-4S] cluster</name>
        <dbReference type="ChEBI" id="CHEBI:49883"/>
        <label>1</label>
        <note>4Fe-4S-S-AdoMet</note>
    </ligand>
</feature>
<feature type="binding site" evidence="1">
    <location>
        <position position="66"/>
    </location>
    <ligand>
        <name>GTP</name>
        <dbReference type="ChEBI" id="CHEBI:37565"/>
    </ligand>
</feature>
<feature type="binding site" evidence="1">
    <location>
        <position position="70"/>
    </location>
    <ligand>
        <name>S-adenosyl-L-methionine</name>
        <dbReference type="ChEBI" id="CHEBI:59789"/>
    </ligand>
</feature>
<feature type="binding site" evidence="1">
    <location>
        <position position="97"/>
    </location>
    <ligand>
        <name>GTP</name>
        <dbReference type="ChEBI" id="CHEBI:37565"/>
    </ligand>
</feature>
<feature type="binding site" evidence="1">
    <location>
        <position position="121"/>
    </location>
    <ligand>
        <name>S-adenosyl-L-methionine</name>
        <dbReference type="ChEBI" id="CHEBI:59789"/>
    </ligand>
</feature>
<feature type="binding site" evidence="1">
    <location>
        <position position="158"/>
    </location>
    <ligand>
        <name>GTP</name>
        <dbReference type="ChEBI" id="CHEBI:37565"/>
    </ligand>
</feature>
<feature type="binding site" evidence="1">
    <location>
        <position position="192"/>
    </location>
    <ligand>
        <name>S-adenosyl-L-methionine</name>
        <dbReference type="ChEBI" id="CHEBI:59789"/>
    </ligand>
</feature>
<feature type="binding site" evidence="1">
    <location>
        <position position="257"/>
    </location>
    <ligand>
        <name>[4Fe-4S] cluster</name>
        <dbReference type="ChEBI" id="CHEBI:49883"/>
        <label>2</label>
        <note>4Fe-4S-substrate</note>
    </ligand>
</feature>
<feature type="binding site" evidence="1">
    <location>
        <position position="260"/>
    </location>
    <ligand>
        <name>[4Fe-4S] cluster</name>
        <dbReference type="ChEBI" id="CHEBI:49883"/>
        <label>2</label>
        <note>4Fe-4S-substrate</note>
    </ligand>
</feature>
<feature type="binding site" evidence="1">
    <location>
        <begin position="262"/>
        <end position="264"/>
    </location>
    <ligand>
        <name>GTP</name>
        <dbReference type="ChEBI" id="CHEBI:37565"/>
    </ligand>
</feature>
<feature type="binding site" evidence="1">
    <location>
        <position position="274"/>
    </location>
    <ligand>
        <name>[4Fe-4S] cluster</name>
        <dbReference type="ChEBI" id="CHEBI:49883"/>
        <label>2</label>
        <note>4Fe-4S-substrate</note>
    </ligand>
</feature>
<comment type="function">
    <text evidence="1">Catalyzes the cyclization of GTP to (8S)-3',8-cyclo-7,8-dihydroguanosine 5'-triphosphate.</text>
</comment>
<comment type="catalytic activity">
    <reaction evidence="1">
        <text>GTP + AH2 + S-adenosyl-L-methionine = (8S)-3',8-cyclo-7,8-dihydroguanosine 5'-triphosphate + 5'-deoxyadenosine + L-methionine + A + H(+)</text>
        <dbReference type="Rhea" id="RHEA:49576"/>
        <dbReference type="ChEBI" id="CHEBI:13193"/>
        <dbReference type="ChEBI" id="CHEBI:15378"/>
        <dbReference type="ChEBI" id="CHEBI:17319"/>
        <dbReference type="ChEBI" id="CHEBI:17499"/>
        <dbReference type="ChEBI" id="CHEBI:37565"/>
        <dbReference type="ChEBI" id="CHEBI:57844"/>
        <dbReference type="ChEBI" id="CHEBI:59789"/>
        <dbReference type="ChEBI" id="CHEBI:131766"/>
        <dbReference type="EC" id="4.1.99.22"/>
    </reaction>
</comment>
<comment type="cofactor">
    <cofactor evidence="1">
        <name>[4Fe-4S] cluster</name>
        <dbReference type="ChEBI" id="CHEBI:49883"/>
    </cofactor>
    <text evidence="1">Binds 2 [4Fe-4S] clusters. Binds 1 [4Fe-4S] cluster coordinated with 3 cysteines and an exchangeable S-adenosyl-L-methionine and 1 [4Fe-4S] cluster coordinated with 3 cysteines and the GTP-derived substrate.</text>
</comment>
<comment type="pathway">
    <text evidence="1">Cofactor biosynthesis; molybdopterin biosynthesis.</text>
</comment>
<comment type="subunit">
    <text evidence="1">Monomer and homodimer.</text>
</comment>
<comment type="similarity">
    <text evidence="1">Belongs to the radical SAM superfamily. MoaA family.</text>
</comment>
<sequence length="333" mass="37867">MQLLKDKFGRVHDYIRISVTDRCNLRCVYCMPEEGLTFLPHEKVLSKDEIVSFMELMVKFGIKKVRITGGEPLLRTDIVEIVRGLGAIPEIEDISITTNAMYLAKKAEALKDAGLTRVNISLDSLHADRFKAITRGGRLQKVLDGIQKAEEVGLFPIKLNVVLIKGQNDDEITDFLRFTKDKDINIRFIEYMPIGHAGTSWKEKYLPLDTIFEACNEAGYEYEPVDSIRGNGPSENFRIKGAKGTFGVIHPVSAHFCDSCNRLRLTADGYIKACLYWDEEMNIRPFIQDPVKLMQLVQKAIDNKPENHEMALKLQDEVQSNKPTWRRMSQIGG</sequence>
<name>MOAA_LISMC</name>
<gene>
    <name evidence="1" type="primary">moaA</name>
    <name type="ordered locus">Lm4b_01067</name>
</gene>
<dbReference type="EC" id="4.1.99.22" evidence="1"/>
<dbReference type="EMBL" id="FM242711">
    <property type="protein sequence ID" value="CAS04833.1"/>
    <property type="molecule type" value="Genomic_DNA"/>
</dbReference>
<dbReference type="RefSeq" id="WP_003727027.1">
    <property type="nucleotide sequence ID" value="NC_012488.1"/>
</dbReference>
<dbReference type="SMR" id="C1L1W8"/>
<dbReference type="KEGG" id="lmc:Lm4b_01067"/>
<dbReference type="HOGENOM" id="CLU_009273_0_1_9"/>
<dbReference type="UniPathway" id="UPA00344"/>
<dbReference type="GO" id="GO:0051539">
    <property type="term" value="F:4 iron, 4 sulfur cluster binding"/>
    <property type="evidence" value="ECO:0007669"/>
    <property type="project" value="UniProtKB-UniRule"/>
</dbReference>
<dbReference type="GO" id="GO:0061799">
    <property type="term" value="F:cyclic pyranopterin monophosphate synthase activity"/>
    <property type="evidence" value="ECO:0007669"/>
    <property type="project" value="TreeGrafter"/>
</dbReference>
<dbReference type="GO" id="GO:0061798">
    <property type="term" value="F:GTP 3',8'-cyclase activity"/>
    <property type="evidence" value="ECO:0007669"/>
    <property type="project" value="UniProtKB-UniRule"/>
</dbReference>
<dbReference type="GO" id="GO:0005525">
    <property type="term" value="F:GTP binding"/>
    <property type="evidence" value="ECO:0007669"/>
    <property type="project" value="UniProtKB-UniRule"/>
</dbReference>
<dbReference type="GO" id="GO:0046872">
    <property type="term" value="F:metal ion binding"/>
    <property type="evidence" value="ECO:0007669"/>
    <property type="project" value="UniProtKB-KW"/>
</dbReference>
<dbReference type="GO" id="GO:1904047">
    <property type="term" value="F:S-adenosyl-L-methionine binding"/>
    <property type="evidence" value="ECO:0007669"/>
    <property type="project" value="UniProtKB-UniRule"/>
</dbReference>
<dbReference type="GO" id="GO:0006777">
    <property type="term" value="P:Mo-molybdopterin cofactor biosynthetic process"/>
    <property type="evidence" value="ECO:0007669"/>
    <property type="project" value="UniProtKB-UniRule"/>
</dbReference>
<dbReference type="CDD" id="cd01335">
    <property type="entry name" value="Radical_SAM"/>
    <property type="match status" value="1"/>
</dbReference>
<dbReference type="CDD" id="cd21117">
    <property type="entry name" value="Twitch_MoaA"/>
    <property type="match status" value="1"/>
</dbReference>
<dbReference type="FunFam" id="3.20.20.70:FF:000250">
    <property type="entry name" value="GTP 3',8-cyclase"/>
    <property type="match status" value="1"/>
</dbReference>
<dbReference type="Gene3D" id="3.20.20.70">
    <property type="entry name" value="Aldolase class I"/>
    <property type="match status" value="1"/>
</dbReference>
<dbReference type="HAMAP" id="MF_01225_B">
    <property type="entry name" value="MoaA_B"/>
    <property type="match status" value="1"/>
</dbReference>
<dbReference type="InterPro" id="IPR013785">
    <property type="entry name" value="Aldolase_TIM"/>
</dbReference>
<dbReference type="InterPro" id="IPR006638">
    <property type="entry name" value="Elp3/MiaA/NifB-like_rSAM"/>
</dbReference>
<dbReference type="InterPro" id="IPR013483">
    <property type="entry name" value="MoaA"/>
</dbReference>
<dbReference type="InterPro" id="IPR000385">
    <property type="entry name" value="MoaA_NifB_PqqE_Fe-S-bd_CS"/>
</dbReference>
<dbReference type="InterPro" id="IPR010505">
    <property type="entry name" value="MoaA_twitch"/>
</dbReference>
<dbReference type="InterPro" id="IPR050105">
    <property type="entry name" value="MoCo_biosynth_MoaA/MoaC"/>
</dbReference>
<dbReference type="InterPro" id="IPR007197">
    <property type="entry name" value="rSAM"/>
</dbReference>
<dbReference type="NCBIfam" id="TIGR02666">
    <property type="entry name" value="moaA"/>
    <property type="match status" value="1"/>
</dbReference>
<dbReference type="NCBIfam" id="NF001199">
    <property type="entry name" value="PRK00164.2-1"/>
    <property type="match status" value="1"/>
</dbReference>
<dbReference type="PANTHER" id="PTHR22960:SF0">
    <property type="entry name" value="MOLYBDENUM COFACTOR BIOSYNTHESIS PROTEIN 1"/>
    <property type="match status" value="1"/>
</dbReference>
<dbReference type="PANTHER" id="PTHR22960">
    <property type="entry name" value="MOLYBDOPTERIN COFACTOR SYNTHESIS PROTEIN A"/>
    <property type="match status" value="1"/>
</dbReference>
<dbReference type="Pfam" id="PF06463">
    <property type="entry name" value="Mob_synth_C"/>
    <property type="match status" value="1"/>
</dbReference>
<dbReference type="Pfam" id="PF04055">
    <property type="entry name" value="Radical_SAM"/>
    <property type="match status" value="1"/>
</dbReference>
<dbReference type="SFLD" id="SFLDG01383">
    <property type="entry name" value="cyclic_pyranopterin_phosphate"/>
    <property type="match status" value="1"/>
</dbReference>
<dbReference type="SFLD" id="SFLDG01216">
    <property type="entry name" value="thioether_bond_formation_requi"/>
    <property type="match status" value="1"/>
</dbReference>
<dbReference type="SMART" id="SM00729">
    <property type="entry name" value="Elp3"/>
    <property type="match status" value="1"/>
</dbReference>
<dbReference type="SUPFAM" id="SSF102114">
    <property type="entry name" value="Radical SAM enzymes"/>
    <property type="match status" value="1"/>
</dbReference>
<dbReference type="PROSITE" id="PS01305">
    <property type="entry name" value="MOAA_NIFB_PQQE"/>
    <property type="match status" value="1"/>
</dbReference>
<dbReference type="PROSITE" id="PS51918">
    <property type="entry name" value="RADICAL_SAM"/>
    <property type="match status" value="1"/>
</dbReference>